<gene>
    <name type="primary">SULTR1;2</name>
    <name type="ordered locus">At1g78000</name>
    <name type="ORF">F28K19.22</name>
</gene>
<evidence type="ECO:0000255" key="1"/>
<evidence type="ECO:0000255" key="2">
    <source>
        <dbReference type="PROSITE-ProRule" id="PRU00198"/>
    </source>
</evidence>
<evidence type="ECO:0000256" key="3">
    <source>
        <dbReference type="SAM" id="MobiDB-lite"/>
    </source>
</evidence>
<evidence type="ECO:0000269" key="4">
    <source>
    </source>
</evidence>
<evidence type="ECO:0000269" key="5">
    <source>
    </source>
</evidence>
<evidence type="ECO:0000269" key="6">
    <source>
    </source>
</evidence>
<evidence type="ECO:0000269" key="7">
    <source>
    </source>
</evidence>
<evidence type="ECO:0000305" key="8"/>
<comment type="function">
    <text evidence="4 5 6">High-affinity H(+)/sulfate cotransporter that mediates the uptake of the environmental sulfate by plant roots. Plays a central role in the regulation of sulfate assimilation. Unable to transport molybdate.</text>
</comment>
<comment type="activity regulation">
    <text evidence="7">Interaction with OASA1 negatively impacts the transporter activity.</text>
</comment>
<comment type="subunit">
    <text evidence="7">Homodimer. Interacts with OASA1 through its STAS domain.</text>
</comment>
<comment type="interaction">
    <interactant intactId="EBI-8772960">
        <id>Q9MAX3</id>
    </interactant>
    <interactant intactId="EBI-1633418">
        <id>P47998</id>
        <label>OASA1</label>
    </interactant>
    <organismsDiffer>false</organismsDiffer>
    <experiments>5</experiments>
</comment>
<comment type="subcellular location">
    <subcellularLocation>
        <location evidence="8">Cell membrane</location>
        <topology evidence="8">Multi-pass membrane protein</topology>
    </subcellularLocation>
</comment>
<comment type="tissue specificity">
    <text evidence="4">Expressed in lateral root cap, root hairs, epidermal and cortical cells of roots.</text>
</comment>
<comment type="induction">
    <text evidence="4">In roots by sulfate starvation.</text>
</comment>
<comment type="miscellaneous">
    <text>Sel1 mutations in the gene lead to the resistance of the plant to selenate, a toxic analog of sulfate.</text>
</comment>
<comment type="similarity">
    <text evidence="8">Belongs to the SLC26A/SulP transporter (TC 2.A.53.1) family.</text>
</comment>
<comment type="sequence caution" evidence="8">
    <conflict type="erroneous gene model prediction">
        <sequence resource="EMBL-CDS" id="AAF17685"/>
    </conflict>
</comment>
<accession>Q9MAX3</accession>
<accession>Q0WTN0</accession>
<accession>Q9SH00</accession>
<dbReference type="EMBL" id="AB042322">
    <property type="protein sequence ID" value="BAA95484.1"/>
    <property type="molecule type" value="mRNA"/>
</dbReference>
<dbReference type="EMBL" id="AC009243">
    <property type="protein sequence ID" value="AAF17685.1"/>
    <property type="status" value="ALT_SEQ"/>
    <property type="molecule type" value="Genomic_DNA"/>
</dbReference>
<dbReference type="EMBL" id="CP002684">
    <property type="protein sequence ID" value="AEE36055.1"/>
    <property type="molecule type" value="Genomic_DNA"/>
</dbReference>
<dbReference type="EMBL" id="CP002684">
    <property type="protein sequence ID" value="AEE36056.1"/>
    <property type="molecule type" value="Genomic_DNA"/>
</dbReference>
<dbReference type="EMBL" id="CP002684">
    <property type="protein sequence ID" value="ANM58967.1"/>
    <property type="molecule type" value="Genomic_DNA"/>
</dbReference>
<dbReference type="EMBL" id="AK227518">
    <property type="protein sequence ID" value="BAE99518.1"/>
    <property type="molecule type" value="mRNA"/>
</dbReference>
<dbReference type="PIR" id="D96809">
    <property type="entry name" value="D96809"/>
</dbReference>
<dbReference type="RefSeq" id="NP_001321366.1">
    <property type="nucleotide sequence ID" value="NM_001334809.1"/>
</dbReference>
<dbReference type="RefSeq" id="NP_565166.1">
    <property type="nucleotide sequence ID" value="NM_106449.3"/>
</dbReference>
<dbReference type="RefSeq" id="NP_849899.1">
    <property type="nucleotide sequence ID" value="NM_179568.2"/>
</dbReference>
<dbReference type="SMR" id="Q9MAX3"/>
<dbReference type="BioGRID" id="29354">
    <property type="interactions" value="7"/>
</dbReference>
<dbReference type="FunCoup" id="Q9MAX3">
    <property type="interactions" value="642"/>
</dbReference>
<dbReference type="IntAct" id="Q9MAX3">
    <property type="interactions" value="4"/>
</dbReference>
<dbReference type="STRING" id="3702.Q9MAX3"/>
<dbReference type="TCDB" id="2.A.53.1.6">
    <property type="family name" value="the sulfate permease (sulp) family"/>
</dbReference>
<dbReference type="iPTMnet" id="Q9MAX3"/>
<dbReference type="PaxDb" id="3702-AT1G78000.1"/>
<dbReference type="ProteomicsDB" id="226753"/>
<dbReference type="EnsemblPlants" id="AT1G78000.1">
    <property type="protein sequence ID" value="AT1G78000.1"/>
    <property type="gene ID" value="AT1G78000"/>
</dbReference>
<dbReference type="EnsemblPlants" id="AT1G78000.2">
    <property type="protein sequence ID" value="AT1G78000.2"/>
    <property type="gene ID" value="AT1G78000"/>
</dbReference>
<dbReference type="EnsemblPlants" id="AT1G78000.3">
    <property type="protein sequence ID" value="AT1G78000.3"/>
    <property type="gene ID" value="AT1G78000"/>
</dbReference>
<dbReference type="GeneID" id="844135"/>
<dbReference type="Gramene" id="AT1G78000.1">
    <property type="protein sequence ID" value="AT1G78000.1"/>
    <property type="gene ID" value="AT1G78000"/>
</dbReference>
<dbReference type="Gramene" id="AT1G78000.2">
    <property type="protein sequence ID" value="AT1G78000.2"/>
    <property type="gene ID" value="AT1G78000"/>
</dbReference>
<dbReference type="Gramene" id="AT1G78000.3">
    <property type="protein sequence ID" value="AT1G78000.3"/>
    <property type="gene ID" value="AT1G78000"/>
</dbReference>
<dbReference type="KEGG" id="ath:AT1G78000"/>
<dbReference type="Araport" id="AT1G78000"/>
<dbReference type="TAIR" id="AT1G78000">
    <property type="gene designation" value="SULTR1"/>
</dbReference>
<dbReference type="eggNOG" id="KOG0236">
    <property type="taxonomic scope" value="Eukaryota"/>
</dbReference>
<dbReference type="HOGENOM" id="CLU_003182_13_2_1"/>
<dbReference type="InParanoid" id="Q9MAX3"/>
<dbReference type="OMA" id="KFMMALQ"/>
<dbReference type="PhylomeDB" id="Q9MAX3"/>
<dbReference type="PRO" id="PR:Q9MAX3"/>
<dbReference type="Proteomes" id="UP000006548">
    <property type="component" value="Chromosome 1"/>
</dbReference>
<dbReference type="ExpressionAtlas" id="Q9MAX3">
    <property type="expression patterns" value="baseline and differential"/>
</dbReference>
<dbReference type="GO" id="GO:0005886">
    <property type="term" value="C:plasma membrane"/>
    <property type="evidence" value="ECO:0000314"/>
    <property type="project" value="TAIR"/>
</dbReference>
<dbReference type="GO" id="GO:0008271">
    <property type="term" value="F:secondary active sulfate transmembrane transporter activity"/>
    <property type="evidence" value="ECO:0007669"/>
    <property type="project" value="InterPro"/>
</dbReference>
<dbReference type="GO" id="GO:0015293">
    <property type="term" value="F:symporter activity"/>
    <property type="evidence" value="ECO:0007669"/>
    <property type="project" value="UniProtKB-KW"/>
</dbReference>
<dbReference type="GO" id="GO:0009970">
    <property type="term" value="P:cellular response to sulfate starvation"/>
    <property type="evidence" value="ECO:0000270"/>
    <property type="project" value="TAIR"/>
</dbReference>
<dbReference type="CDD" id="cd07042">
    <property type="entry name" value="STAS_SulP_like_sulfate_transporter"/>
    <property type="match status" value="1"/>
</dbReference>
<dbReference type="FunFam" id="3.30.750.24:FF:000002">
    <property type="entry name" value="Sulfate transporter 31"/>
    <property type="match status" value="1"/>
</dbReference>
<dbReference type="Gene3D" id="3.30.750.24">
    <property type="entry name" value="STAS domain"/>
    <property type="match status" value="1"/>
</dbReference>
<dbReference type="InterPro" id="IPR018045">
    <property type="entry name" value="S04_transporter_CS"/>
</dbReference>
<dbReference type="InterPro" id="IPR011547">
    <property type="entry name" value="SLC26A/SulP_dom"/>
</dbReference>
<dbReference type="InterPro" id="IPR001902">
    <property type="entry name" value="SLC26A/SulP_fam"/>
</dbReference>
<dbReference type="InterPro" id="IPR002645">
    <property type="entry name" value="STAS_dom"/>
</dbReference>
<dbReference type="InterPro" id="IPR036513">
    <property type="entry name" value="STAS_dom_sf"/>
</dbReference>
<dbReference type="NCBIfam" id="TIGR00815">
    <property type="entry name" value="sulP"/>
    <property type="match status" value="1"/>
</dbReference>
<dbReference type="PANTHER" id="PTHR11814">
    <property type="entry name" value="SULFATE TRANSPORTER"/>
    <property type="match status" value="1"/>
</dbReference>
<dbReference type="Pfam" id="PF01740">
    <property type="entry name" value="STAS"/>
    <property type="match status" value="1"/>
</dbReference>
<dbReference type="Pfam" id="PF00916">
    <property type="entry name" value="Sulfate_transp"/>
    <property type="match status" value="1"/>
</dbReference>
<dbReference type="SUPFAM" id="SSF52091">
    <property type="entry name" value="SpoIIaa-like"/>
    <property type="match status" value="1"/>
</dbReference>
<dbReference type="PROSITE" id="PS01130">
    <property type="entry name" value="SLC26A"/>
    <property type="match status" value="1"/>
</dbReference>
<dbReference type="PROSITE" id="PS50801">
    <property type="entry name" value="STAS"/>
    <property type="match status" value="1"/>
</dbReference>
<proteinExistence type="evidence at protein level"/>
<protein>
    <recommendedName>
        <fullName>Sulfate transporter 1.2</fullName>
    </recommendedName>
</protein>
<name>SUT12_ARATH</name>
<keyword id="KW-1003">Cell membrane</keyword>
<keyword id="KW-0472">Membrane</keyword>
<keyword id="KW-1185">Reference proteome</keyword>
<keyword id="KW-0764">Sulfate transport</keyword>
<keyword id="KW-0769">Symport</keyword>
<keyword id="KW-0812">Transmembrane</keyword>
<keyword id="KW-1133">Transmembrane helix</keyword>
<keyword id="KW-0813">Transport</keyword>
<reference key="1">
    <citation type="journal article" date="2002" name="Plant J.">
        <title>Two distinct high-affinity sulfate transporters with different inducibilities mediate uptake of sulfate in Arabidopsis roots.</title>
        <authorList>
            <person name="Yoshimoto N."/>
            <person name="Takahashi H."/>
            <person name="Smith F.W."/>
            <person name="Yamaya T."/>
            <person name="Saito K."/>
        </authorList>
    </citation>
    <scope>NUCLEOTIDE SEQUENCE [MRNA]</scope>
    <scope>FUNCTION</scope>
    <scope>TISSUE SPECIFICITY</scope>
    <scope>INDUCTION</scope>
    <source>
        <strain>cv. Columbia</strain>
    </source>
</reference>
<reference key="2">
    <citation type="journal article" date="2000" name="Nature">
        <title>Sequence and analysis of chromosome 1 of the plant Arabidopsis thaliana.</title>
        <authorList>
            <person name="Theologis A."/>
            <person name="Ecker J.R."/>
            <person name="Palm C.J."/>
            <person name="Federspiel N.A."/>
            <person name="Kaul S."/>
            <person name="White O."/>
            <person name="Alonso J."/>
            <person name="Altafi H."/>
            <person name="Araujo R."/>
            <person name="Bowman C.L."/>
            <person name="Brooks S.Y."/>
            <person name="Buehler E."/>
            <person name="Chan A."/>
            <person name="Chao Q."/>
            <person name="Chen H."/>
            <person name="Cheuk R.F."/>
            <person name="Chin C.W."/>
            <person name="Chung M.K."/>
            <person name="Conn L."/>
            <person name="Conway A.B."/>
            <person name="Conway A.R."/>
            <person name="Creasy T.H."/>
            <person name="Dewar K."/>
            <person name="Dunn P."/>
            <person name="Etgu P."/>
            <person name="Feldblyum T.V."/>
            <person name="Feng J.-D."/>
            <person name="Fong B."/>
            <person name="Fujii C.Y."/>
            <person name="Gill J.E."/>
            <person name="Goldsmith A.D."/>
            <person name="Haas B."/>
            <person name="Hansen N.F."/>
            <person name="Hughes B."/>
            <person name="Huizar L."/>
            <person name="Hunter J.L."/>
            <person name="Jenkins J."/>
            <person name="Johnson-Hopson C."/>
            <person name="Khan S."/>
            <person name="Khaykin E."/>
            <person name="Kim C.J."/>
            <person name="Koo H.L."/>
            <person name="Kremenetskaia I."/>
            <person name="Kurtz D.B."/>
            <person name="Kwan A."/>
            <person name="Lam B."/>
            <person name="Langin-Hooper S."/>
            <person name="Lee A."/>
            <person name="Lee J.M."/>
            <person name="Lenz C.A."/>
            <person name="Li J.H."/>
            <person name="Li Y.-P."/>
            <person name="Lin X."/>
            <person name="Liu S.X."/>
            <person name="Liu Z.A."/>
            <person name="Luros J.S."/>
            <person name="Maiti R."/>
            <person name="Marziali A."/>
            <person name="Militscher J."/>
            <person name="Miranda M."/>
            <person name="Nguyen M."/>
            <person name="Nierman W.C."/>
            <person name="Osborne B.I."/>
            <person name="Pai G."/>
            <person name="Peterson J."/>
            <person name="Pham P.K."/>
            <person name="Rizzo M."/>
            <person name="Rooney T."/>
            <person name="Rowley D."/>
            <person name="Sakano H."/>
            <person name="Salzberg S.L."/>
            <person name="Schwartz J.R."/>
            <person name="Shinn P."/>
            <person name="Southwick A.M."/>
            <person name="Sun H."/>
            <person name="Tallon L.J."/>
            <person name="Tambunga G."/>
            <person name="Toriumi M.J."/>
            <person name="Town C.D."/>
            <person name="Utterback T."/>
            <person name="Van Aken S."/>
            <person name="Vaysberg M."/>
            <person name="Vysotskaia V.S."/>
            <person name="Walker M."/>
            <person name="Wu D."/>
            <person name="Yu G."/>
            <person name="Fraser C.M."/>
            <person name="Venter J.C."/>
            <person name="Davis R.W."/>
        </authorList>
    </citation>
    <scope>NUCLEOTIDE SEQUENCE [LARGE SCALE GENOMIC DNA]</scope>
    <source>
        <strain>cv. Columbia</strain>
    </source>
</reference>
<reference key="3">
    <citation type="journal article" date="2017" name="Plant J.">
        <title>Araport11: a complete reannotation of the Arabidopsis thaliana reference genome.</title>
        <authorList>
            <person name="Cheng C.Y."/>
            <person name="Krishnakumar V."/>
            <person name="Chan A.P."/>
            <person name="Thibaud-Nissen F."/>
            <person name="Schobel S."/>
            <person name="Town C.D."/>
        </authorList>
    </citation>
    <scope>GENOME REANNOTATION</scope>
    <source>
        <strain>cv. Columbia</strain>
    </source>
</reference>
<reference key="4">
    <citation type="submission" date="2006-07" db="EMBL/GenBank/DDBJ databases">
        <title>Large-scale analysis of RIKEN Arabidopsis full-length (RAFL) cDNAs.</title>
        <authorList>
            <person name="Totoki Y."/>
            <person name="Seki M."/>
            <person name="Ishida J."/>
            <person name="Nakajima M."/>
            <person name="Enju A."/>
            <person name="Kamiya A."/>
            <person name="Narusaka M."/>
            <person name="Shin-i T."/>
            <person name="Nakagawa M."/>
            <person name="Sakamoto N."/>
            <person name="Oishi K."/>
            <person name="Kohara Y."/>
            <person name="Kobayashi M."/>
            <person name="Toyoda A."/>
            <person name="Sakaki Y."/>
            <person name="Sakurai T."/>
            <person name="Iida K."/>
            <person name="Akiyama K."/>
            <person name="Satou M."/>
            <person name="Toyoda T."/>
            <person name="Konagaya A."/>
            <person name="Carninci P."/>
            <person name="Kawai J."/>
            <person name="Hayashizaki Y."/>
            <person name="Shinozaki K."/>
        </authorList>
    </citation>
    <scope>NUCLEOTIDE SEQUENCE [LARGE SCALE MRNA]</scope>
    <source>
        <strain>cv. Columbia</strain>
    </source>
</reference>
<reference key="5">
    <citation type="journal article" date="2002" name="Plant J.">
        <title>Selenate-resistant mutants of Arabidopsis thaliana identify Sultr1;2, a sulfate transporter required for efficient transport of sulfate into roots.</title>
        <authorList>
            <person name="Shibagaki N."/>
            <person name="Rose A."/>
            <person name="McDermott J.P."/>
            <person name="Fujiwara T."/>
            <person name="Hayashi H."/>
            <person name="Yoneyama T."/>
            <person name="Davies J.P."/>
        </authorList>
    </citation>
    <scope>FUNCTION</scope>
    <scope>MUTANTS SEL1</scope>
</reference>
<reference key="6">
    <citation type="journal article" date="2007" name="Proc. Natl. Acad. Sci. U.S.A.">
        <title>An Arabidopsis thaliana high-affinity molybdate transporter required for efficient uptake of molybdate from soil.</title>
        <authorList>
            <person name="Tomatsu H."/>
            <person name="Takano J."/>
            <person name="Takahashi H."/>
            <person name="Watanabe-Takahashi A."/>
            <person name="Shibagaki N."/>
            <person name="Fujiwara T."/>
        </authorList>
    </citation>
    <scope>FUNCTION</scope>
    <source>
        <strain>cv. Columbia</strain>
    </source>
</reference>
<reference key="7">
    <citation type="journal article" date="2010" name="J. Biol. Chem.">
        <title>Binding of cysteine synthase to the STAS domain of sulfate transporter and its regulatory consequences.</title>
        <authorList>
            <person name="Shibagaki N."/>
            <person name="Grossman A.R."/>
        </authorList>
    </citation>
    <scope>HOMODIMERIZATION</scope>
    <scope>INTERACTION WITH OASA1</scope>
    <scope>ACTIVITY REGULATION</scope>
</reference>
<feature type="chain" id="PRO_0000080173" description="Sulfate transporter 1.2">
    <location>
        <begin position="1"/>
        <end position="653"/>
    </location>
</feature>
<feature type="topological domain" description="Cytoplasmic" evidence="1">
    <location>
        <begin position="1"/>
        <end position="91"/>
    </location>
</feature>
<feature type="transmembrane region" description="Helical" evidence="1">
    <location>
        <begin position="92"/>
        <end position="112"/>
    </location>
</feature>
<feature type="topological domain" description="Extracellular" evidence="1">
    <location>
        <begin position="113"/>
        <end position="116"/>
    </location>
</feature>
<feature type="transmembrane region" description="Helical" evidence="1">
    <location>
        <begin position="117"/>
        <end position="137"/>
    </location>
</feature>
<feature type="topological domain" description="Cytoplasmic" evidence="1">
    <location>
        <begin position="138"/>
        <end position="141"/>
    </location>
</feature>
<feature type="transmembrane region" description="Helical" evidence="1">
    <location>
        <begin position="142"/>
        <end position="162"/>
    </location>
</feature>
<feature type="topological domain" description="Extracellular" evidence="1">
    <location>
        <begin position="163"/>
        <end position="173"/>
    </location>
</feature>
<feature type="transmembrane region" description="Helical" evidence="1">
    <location>
        <begin position="174"/>
        <end position="194"/>
    </location>
</feature>
<feature type="transmembrane region" description="Helical" evidence="1">
    <location>
        <begin position="195"/>
        <end position="215"/>
    </location>
</feature>
<feature type="topological domain" description="Extracellular" evidence="1">
    <location>
        <begin position="216"/>
        <end position="253"/>
    </location>
</feature>
<feature type="transmembrane region" description="Helical" evidence="1">
    <location>
        <begin position="254"/>
        <end position="274"/>
    </location>
</feature>
<feature type="topological domain" description="Cytoplasmic" evidence="1">
    <location>
        <begin position="275"/>
        <end position="280"/>
    </location>
</feature>
<feature type="transmembrane region" description="Helical" evidence="1">
    <location>
        <begin position="281"/>
        <end position="301"/>
    </location>
</feature>
<feature type="topological domain" description="Extracellular" evidence="1">
    <location>
        <begin position="302"/>
        <end position="339"/>
    </location>
</feature>
<feature type="transmembrane region" description="Helical" evidence="1">
    <location>
        <begin position="340"/>
        <end position="360"/>
    </location>
</feature>
<feature type="topological domain" description="Cytoplasmic" evidence="1">
    <location>
        <begin position="361"/>
        <end position="372"/>
    </location>
</feature>
<feature type="transmembrane region" description="Helical" evidence="1">
    <location>
        <begin position="373"/>
        <end position="393"/>
    </location>
</feature>
<feature type="topological domain" description="Extracellular" evidence="1">
    <location>
        <begin position="394"/>
        <end position="409"/>
    </location>
</feature>
<feature type="transmembrane region" description="Helical" evidence="1">
    <location>
        <begin position="410"/>
        <end position="430"/>
    </location>
</feature>
<feature type="topological domain" description="Cytoplasmic" evidence="1">
    <location>
        <begin position="431"/>
        <end position="438"/>
    </location>
</feature>
<feature type="transmembrane region" description="Helical" evidence="1">
    <location>
        <begin position="439"/>
        <end position="459"/>
    </location>
</feature>
<feature type="topological domain" description="Extracellular" evidence="1">
    <location>
        <begin position="460"/>
        <end position="466"/>
    </location>
</feature>
<feature type="transmembrane region" description="Helical" evidence="1">
    <location>
        <begin position="467"/>
        <end position="487"/>
    </location>
</feature>
<feature type="topological domain" description="Cytoplasmic" evidence="1">
    <location>
        <begin position="488"/>
        <end position="653"/>
    </location>
</feature>
<feature type="domain" description="STAS" evidence="2">
    <location>
        <begin position="522"/>
        <end position="645"/>
    </location>
</feature>
<feature type="region of interest" description="Disordered" evidence="3">
    <location>
        <begin position="1"/>
        <end position="30"/>
    </location>
</feature>
<feature type="mutagenesis site" description="In sel1-8; reduces drastically sulfate transport activity.">
    <original>I</original>
    <variation>T</variation>
    <location>
        <position position="511"/>
    </location>
</feature>
<sequence>MSSRAHPVDGSPATDGGHVPMKPSPTRHKVGIPPKQNMFKDFMYTFKETFFHDDPLRDFKDQPKSKQFMLGLQSVFPVFDWGRNYTFKKFRGDLISGLTIASLCIPQDIGYAKLANLDPKYGLYSSFVPPLVYACMGSSRDIAIGPVAVVSLLLGTLLRAEIDPNTSPDEYLRLAFTATFFAGITEAALGFFRLGFLIDFLSHAAVVGFMGGAAITIALQQLKGFLGIKKFTKKTDIISVLESVFKAAHHGWNWQTILIGASFLTFLLTSKIIGKKSKKLFWVPAIAPLISVIVSTFFVYITRADKQGVQIVKHLDQGINPSSFHLIYFTGDNLAKGIRIGVVAGMVALTEAVAIGRTFAAMKDYQIDGNKEMVALGMMNVVGSMSSCYVATGSFSRSAVNFMAGCQTAVSNIIMSIVVLLTLLFLTPLFKYTPNAILAAIIINAVIPLIDIQAAILIFKVDKLDFIACIGAFFGVIFVSVEIGLLIAVSISFAKILLQVTRPRTAVLGNIPRTSVYRNIQQYPEATMVPGVLTIRVDSAIYFSNSNYVRERIQRWLHEEEEKVKAASLPRIQFLIIEMSPVTDIDTSGIHALEDLYKSLQKRDIQLILANPGPLVIGKLHLSHFADMLGQDNIYLTVADAVEACCPKLSNEV</sequence>
<organism>
    <name type="scientific">Arabidopsis thaliana</name>
    <name type="common">Mouse-ear cress</name>
    <dbReference type="NCBI Taxonomy" id="3702"/>
    <lineage>
        <taxon>Eukaryota</taxon>
        <taxon>Viridiplantae</taxon>
        <taxon>Streptophyta</taxon>
        <taxon>Embryophyta</taxon>
        <taxon>Tracheophyta</taxon>
        <taxon>Spermatophyta</taxon>
        <taxon>Magnoliopsida</taxon>
        <taxon>eudicotyledons</taxon>
        <taxon>Gunneridae</taxon>
        <taxon>Pentapetalae</taxon>
        <taxon>rosids</taxon>
        <taxon>malvids</taxon>
        <taxon>Brassicales</taxon>
        <taxon>Brassicaceae</taxon>
        <taxon>Camelineae</taxon>
        <taxon>Arabidopsis</taxon>
    </lineage>
</organism>